<comment type="function">
    <text evidence="1">Mediates the nuclear export of encapsidated genomic RNAs (ribonucleoproteins, RNPs). Acts as an adapter between viral RNPs complexes and the nuclear export machinery of the cell. Possesses no intrinsic RNA-binding activity, but includes a C-terminal M1-binding domain. This domain is believed to allow recognition of RNPs bound to the protein M1. Since protein M1 is not available in large quantities before late stages of infection, such an indirect recognition mechanism probably ensures that genomic RNPs are not exported from the host nucleus until sufficient quantities of viral mRNA and progeny genomic RNA have been synthesized. Furthermore, the RNPs enter the host cytoplasm only when associated with the M1 protein that is necessary to guide them to the plasma membrane. May down-regulate viral RNA synthesis when overproduced.</text>
</comment>
<comment type="subunit">
    <text evidence="1">Interacts with protein M1. May interact with host nucleoporin RAB/HRB and exportin XPO1/CRM1.</text>
</comment>
<comment type="subcellular location">
    <subcellularLocation>
        <location evidence="1">Virion</location>
    </subcellularLocation>
    <subcellularLocation>
        <location evidence="1">Host nucleus</location>
    </subcellularLocation>
</comment>
<comment type="alternative products">
    <event type="alternative splicing"/>
    <isoform>
        <id>P69268-1</id>
        <name>NEP</name>
        <name>NS2</name>
        <sequence type="displayed"/>
    </isoform>
    <isoform>
        <id>P13141-1</id>
        <name>NS1</name>
        <sequence type="external"/>
    </isoform>
</comment>
<comment type="miscellaneous">
    <text>Average number present in a viral particle is estimated to be 130-200 molecules.</text>
</comment>
<comment type="similarity">
    <text evidence="1">Belongs to the influenza viruses NEP family.</text>
</comment>
<dbReference type="EMBL" id="M25371">
    <property type="protein sequence ID" value="AAA43560.1"/>
    <property type="molecule type" value="Genomic_RNA"/>
</dbReference>
<dbReference type="PIR" id="F32663">
    <property type="entry name" value="MNIVB7"/>
</dbReference>
<dbReference type="SMR" id="P69268"/>
<dbReference type="GO" id="GO:0042025">
    <property type="term" value="C:host cell nucleus"/>
    <property type="evidence" value="ECO:0007669"/>
    <property type="project" value="UniProtKB-SubCell"/>
</dbReference>
<dbReference type="GO" id="GO:0044423">
    <property type="term" value="C:virion component"/>
    <property type="evidence" value="ECO:0007669"/>
    <property type="project" value="UniProtKB-UniRule"/>
</dbReference>
<dbReference type="GO" id="GO:0039675">
    <property type="term" value="P:exit of virus from host cell nucleus through nuclear pore"/>
    <property type="evidence" value="ECO:0007669"/>
    <property type="project" value="UniProtKB-UniRule"/>
</dbReference>
<dbReference type="Gene3D" id="1.10.287.230">
    <property type="match status" value="1"/>
</dbReference>
<dbReference type="HAMAP" id="MF_04067">
    <property type="entry name" value="INFV_NEP"/>
    <property type="match status" value="1"/>
</dbReference>
<dbReference type="InterPro" id="IPR000968">
    <property type="entry name" value="Flu_NS2"/>
</dbReference>
<dbReference type="Pfam" id="PF00601">
    <property type="entry name" value="Flu_NS2"/>
    <property type="match status" value="1"/>
</dbReference>
<dbReference type="SUPFAM" id="SSF101156">
    <property type="entry name" value="Nonstructural protein ns2, Nep, M1-binding domain"/>
    <property type="match status" value="1"/>
</dbReference>
<accession>P69268</accession>
<accession>P13149</accession>
<name>NEP_I79A2</name>
<protein>
    <recommendedName>
        <fullName evidence="1">Nuclear export protein</fullName>
        <shortName evidence="1">NEP</shortName>
    </recommendedName>
    <alternativeName>
        <fullName evidence="1">Non-structural protein 2</fullName>
        <shortName evidence="1">NS2</shortName>
    </alternativeName>
</protein>
<keyword id="KW-0025">Alternative splicing</keyword>
<keyword id="KW-1048">Host nucleus</keyword>
<keyword id="KW-0945">Host-virus interaction</keyword>
<keyword id="KW-0813">Transport</keyword>
<keyword id="KW-0946">Virion</keyword>
<feature type="chain" id="PRO_0000079002" description="Nuclear export protein">
    <location>
        <begin position="1"/>
        <end position="121"/>
    </location>
</feature>
<feature type="short sequence motif" description="Nuclear export signal" evidence="1">
    <location>
        <begin position="12"/>
        <end position="21"/>
    </location>
</feature>
<feature type="short sequence motif" description="Nuclear export signal" evidence="1">
    <location>
        <begin position="85"/>
        <end position="94"/>
    </location>
</feature>
<sequence>MDSNTITSFQDILQRMSKMQLESSSADLNGMITQFERLKIYRDSLGESVMRMGDLHSLQNRNATWRDELSQKFEEIRWLIAECRNILTKTENSFEQITFLQALQLLLEVESEIRTFSFQLI</sequence>
<gene>
    <name evidence="1" type="primary">NS</name>
</gene>
<evidence type="ECO:0000255" key="1">
    <source>
        <dbReference type="HAMAP-Rule" id="MF_04067"/>
    </source>
</evidence>
<proteinExistence type="inferred from homology"/>
<organismHost>
    <name type="scientific">Aves</name>
    <dbReference type="NCBI Taxonomy" id="8782"/>
</organismHost>
<reference key="1">
    <citation type="journal article" date="1989" name="Virology">
        <title>The B allele of the NS gene of avian influenza viruses, but not the A allele, attenuates a human influenza A virus for squirrel monkeys.</title>
        <authorList>
            <person name="Treanor J.J."/>
            <person name="Snyder M.H."/>
            <person name="London W.T."/>
            <person name="Murphy B.R."/>
        </authorList>
    </citation>
    <scope>NUCLEOTIDE SEQUENCE [GENOMIC RNA]</scope>
</reference>
<organism>
    <name type="scientific">Influenza A virus (strain A/Pintail/Alberta/121/1979 H7N8)</name>
    <dbReference type="NCBI Taxonomy" id="11450"/>
    <lineage>
        <taxon>Viruses</taxon>
        <taxon>Riboviria</taxon>
        <taxon>Orthornavirae</taxon>
        <taxon>Negarnaviricota</taxon>
        <taxon>Polyploviricotina</taxon>
        <taxon>Insthoviricetes</taxon>
        <taxon>Articulavirales</taxon>
        <taxon>Orthomyxoviridae</taxon>
        <taxon>Alphainfluenzavirus</taxon>
        <taxon>Alphainfluenzavirus influenzae</taxon>
        <taxon>Influenza A virus</taxon>
    </lineage>
</organism>